<accession>Q83ME2</accession>
<accession>Q7C381</accession>
<protein>
    <recommendedName>
        <fullName evidence="1">Glutamyl-Q tRNA(Asp) synthetase</fullName>
        <shortName evidence="1">Glu-Q-RSs</shortName>
        <ecNumber evidence="1">6.1.1.-</ecNumber>
    </recommendedName>
</protein>
<sequence length="308" mass="34838">MLPPYFLFKEMTDTQYIGRFAPSPSGELHFGSLIAALGSYLQARARQGRWLVRIEDIDPPREVPGAAETILRQLEHYGLHWDGDVLWQSQRHDAYREALAWLHEQGLSYYCTCTRARIQSIGGIYDGHCRVLHHGPDNAAVRIRQQHPVTQFTDLLRGIIHADEKLAREDFIIHRRDGLFAYNLAVVVDDHFQGVTEIVRGADLIEPTVRQIPLYQLFGWKVPDYIHLPLALNPQGAKLSKQNHAPALPKGDPRPVLIAALQFLGQQAEAHWQDFSVEQILQSAVKNWMLTAVPESAIVNSTFSNASC</sequence>
<feature type="chain" id="PRO_0000208327" description="Glutamyl-Q tRNA(Asp) synthetase">
    <location>
        <begin position="1"/>
        <end position="308"/>
    </location>
</feature>
<feature type="short sequence motif" description="'HIGH' region">
    <location>
        <begin position="22"/>
        <end position="32"/>
    </location>
</feature>
<feature type="short sequence motif" description="'KMSKS' region">
    <location>
        <begin position="238"/>
        <end position="242"/>
    </location>
</feature>
<feature type="binding site" evidence="1">
    <location>
        <begin position="19"/>
        <end position="23"/>
    </location>
    <ligand>
        <name>L-glutamate</name>
        <dbReference type="ChEBI" id="CHEBI:29985"/>
    </ligand>
</feature>
<feature type="binding site" evidence="1">
    <location>
        <position position="55"/>
    </location>
    <ligand>
        <name>L-glutamate</name>
        <dbReference type="ChEBI" id="CHEBI:29985"/>
    </ligand>
</feature>
<feature type="binding site" evidence="1">
    <location>
        <position position="111"/>
    </location>
    <ligand>
        <name>Zn(2+)</name>
        <dbReference type="ChEBI" id="CHEBI:29105"/>
    </ligand>
</feature>
<feature type="binding site" evidence="1">
    <location>
        <position position="113"/>
    </location>
    <ligand>
        <name>Zn(2+)</name>
        <dbReference type="ChEBI" id="CHEBI:29105"/>
    </ligand>
</feature>
<feature type="binding site" evidence="1">
    <location>
        <position position="125"/>
    </location>
    <ligand>
        <name>Zn(2+)</name>
        <dbReference type="ChEBI" id="CHEBI:29105"/>
    </ligand>
</feature>
<feature type="binding site" evidence="1">
    <location>
        <position position="129"/>
    </location>
    <ligand>
        <name>Zn(2+)</name>
        <dbReference type="ChEBI" id="CHEBI:29105"/>
    </ligand>
</feature>
<feature type="binding site" evidence="1">
    <location>
        <position position="182"/>
    </location>
    <ligand>
        <name>L-glutamate</name>
        <dbReference type="ChEBI" id="CHEBI:29985"/>
    </ligand>
</feature>
<feature type="binding site" evidence="1">
    <location>
        <position position="200"/>
    </location>
    <ligand>
        <name>L-glutamate</name>
        <dbReference type="ChEBI" id="CHEBI:29985"/>
    </ligand>
</feature>
<feature type="binding site" evidence="1">
    <location>
        <position position="241"/>
    </location>
    <ligand>
        <name>ATP</name>
        <dbReference type="ChEBI" id="CHEBI:30616"/>
    </ligand>
</feature>
<gene>
    <name evidence="1" type="primary">gluQ</name>
    <name type="ordered locus">SF0136</name>
    <name type="ordered locus">S0139</name>
</gene>
<comment type="function">
    <text evidence="1">Catalyzes the tRNA-independent activation of glutamate in presence of ATP and the subsequent transfer of glutamate onto a tRNA(Asp). Glutamate is transferred on the 2-amino-5-(4,5-dihydroxy-2-cyclopenten-1-yl) moiety of the queuosine in the wobble position of the QUC anticodon.</text>
</comment>
<comment type="cofactor">
    <cofactor evidence="1">
        <name>Zn(2+)</name>
        <dbReference type="ChEBI" id="CHEBI:29105"/>
    </cofactor>
    <text evidence="1">Binds 1 zinc ion per subunit.</text>
</comment>
<comment type="similarity">
    <text evidence="1">Belongs to the class-I aminoacyl-tRNA synthetase family. GluQ subfamily.</text>
</comment>
<organism>
    <name type="scientific">Shigella flexneri</name>
    <dbReference type="NCBI Taxonomy" id="623"/>
    <lineage>
        <taxon>Bacteria</taxon>
        <taxon>Pseudomonadati</taxon>
        <taxon>Pseudomonadota</taxon>
        <taxon>Gammaproteobacteria</taxon>
        <taxon>Enterobacterales</taxon>
        <taxon>Enterobacteriaceae</taxon>
        <taxon>Shigella</taxon>
    </lineage>
</organism>
<name>GLUQ_SHIFL</name>
<proteinExistence type="inferred from homology"/>
<evidence type="ECO:0000255" key="1">
    <source>
        <dbReference type="HAMAP-Rule" id="MF_01428"/>
    </source>
</evidence>
<dbReference type="EC" id="6.1.1.-" evidence="1"/>
<dbReference type="EMBL" id="AE005674">
    <property type="protein sequence ID" value="AAN41799.1"/>
    <property type="molecule type" value="Genomic_DNA"/>
</dbReference>
<dbReference type="EMBL" id="AE014073">
    <property type="protein sequence ID" value="AAP15680.1"/>
    <property type="molecule type" value="Genomic_DNA"/>
</dbReference>
<dbReference type="SMR" id="Q83ME2"/>
<dbReference type="STRING" id="198214.SF0136"/>
<dbReference type="PaxDb" id="198214-SF0136"/>
<dbReference type="KEGG" id="sfl:SF0136"/>
<dbReference type="KEGG" id="sfx:S0139"/>
<dbReference type="PATRIC" id="fig|198214.7.peg.153"/>
<dbReference type="HOGENOM" id="CLU_015768_0_1_6"/>
<dbReference type="Proteomes" id="UP000001006">
    <property type="component" value="Chromosome"/>
</dbReference>
<dbReference type="Proteomes" id="UP000002673">
    <property type="component" value="Chromosome"/>
</dbReference>
<dbReference type="GO" id="GO:0005829">
    <property type="term" value="C:cytosol"/>
    <property type="evidence" value="ECO:0007669"/>
    <property type="project" value="TreeGrafter"/>
</dbReference>
<dbReference type="GO" id="GO:0005524">
    <property type="term" value="F:ATP binding"/>
    <property type="evidence" value="ECO:0007669"/>
    <property type="project" value="UniProtKB-KW"/>
</dbReference>
<dbReference type="GO" id="GO:0004818">
    <property type="term" value="F:glutamate-tRNA ligase activity"/>
    <property type="evidence" value="ECO:0007669"/>
    <property type="project" value="TreeGrafter"/>
</dbReference>
<dbReference type="GO" id="GO:0008270">
    <property type="term" value="F:zinc ion binding"/>
    <property type="evidence" value="ECO:0007669"/>
    <property type="project" value="UniProtKB-UniRule"/>
</dbReference>
<dbReference type="GO" id="GO:0006424">
    <property type="term" value="P:glutamyl-tRNA aminoacylation"/>
    <property type="evidence" value="ECO:0007669"/>
    <property type="project" value="InterPro"/>
</dbReference>
<dbReference type="GO" id="GO:0006400">
    <property type="term" value="P:tRNA modification"/>
    <property type="evidence" value="ECO:0007669"/>
    <property type="project" value="InterPro"/>
</dbReference>
<dbReference type="FunFam" id="3.40.50.620:FF:000093">
    <property type="entry name" value="Glutamyl-Q tRNA(Asp) synthetase"/>
    <property type="match status" value="1"/>
</dbReference>
<dbReference type="Gene3D" id="3.40.50.620">
    <property type="entry name" value="HUPs"/>
    <property type="match status" value="1"/>
</dbReference>
<dbReference type="HAMAP" id="MF_01428">
    <property type="entry name" value="Glu_Q_tRNA_synth"/>
    <property type="match status" value="1"/>
</dbReference>
<dbReference type="InterPro" id="IPR022380">
    <property type="entry name" value="Glu-Q_tRNA(Asp)_Synthase"/>
</dbReference>
<dbReference type="InterPro" id="IPR000924">
    <property type="entry name" value="Glu/Gln-tRNA-synth"/>
</dbReference>
<dbReference type="InterPro" id="IPR020058">
    <property type="entry name" value="Glu/Gln-tRNA-synth_Ib_cat-dom"/>
</dbReference>
<dbReference type="InterPro" id="IPR049940">
    <property type="entry name" value="GluQ/Sye"/>
</dbReference>
<dbReference type="InterPro" id="IPR014729">
    <property type="entry name" value="Rossmann-like_a/b/a_fold"/>
</dbReference>
<dbReference type="NCBIfam" id="NF004312">
    <property type="entry name" value="PRK05710.1-1"/>
    <property type="match status" value="1"/>
</dbReference>
<dbReference type="NCBIfam" id="NF004314">
    <property type="entry name" value="PRK05710.1-3"/>
    <property type="match status" value="1"/>
</dbReference>
<dbReference type="NCBIfam" id="TIGR03838">
    <property type="entry name" value="queuosine_YadB"/>
    <property type="match status" value="1"/>
</dbReference>
<dbReference type="PANTHER" id="PTHR43311">
    <property type="entry name" value="GLUTAMATE--TRNA LIGASE"/>
    <property type="match status" value="1"/>
</dbReference>
<dbReference type="PANTHER" id="PTHR43311:SF1">
    <property type="entry name" value="GLUTAMYL-Q TRNA(ASP) SYNTHETASE"/>
    <property type="match status" value="1"/>
</dbReference>
<dbReference type="Pfam" id="PF00749">
    <property type="entry name" value="tRNA-synt_1c"/>
    <property type="match status" value="1"/>
</dbReference>
<dbReference type="PRINTS" id="PR00987">
    <property type="entry name" value="TRNASYNTHGLU"/>
</dbReference>
<dbReference type="SUPFAM" id="SSF52374">
    <property type="entry name" value="Nucleotidylyl transferase"/>
    <property type="match status" value="1"/>
</dbReference>
<keyword id="KW-0030">Aminoacyl-tRNA synthetase</keyword>
<keyword id="KW-0067">ATP-binding</keyword>
<keyword id="KW-0436">Ligase</keyword>
<keyword id="KW-0479">Metal-binding</keyword>
<keyword id="KW-0547">Nucleotide-binding</keyword>
<keyword id="KW-1185">Reference proteome</keyword>
<keyword id="KW-0862">Zinc</keyword>
<reference key="1">
    <citation type="journal article" date="2002" name="Nucleic Acids Res.">
        <title>Genome sequence of Shigella flexneri 2a: insights into pathogenicity through comparison with genomes of Escherichia coli K12 and O157.</title>
        <authorList>
            <person name="Jin Q."/>
            <person name="Yuan Z."/>
            <person name="Xu J."/>
            <person name="Wang Y."/>
            <person name="Shen Y."/>
            <person name="Lu W."/>
            <person name="Wang J."/>
            <person name="Liu H."/>
            <person name="Yang J."/>
            <person name="Yang F."/>
            <person name="Zhang X."/>
            <person name="Zhang J."/>
            <person name="Yang G."/>
            <person name="Wu H."/>
            <person name="Qu D."/>
            <person name="Dong J."/>
            <person name="Sun L."/>
            <person name="Xue Y."/>
            <person name="Zhao A."/>
            <person name="Gao Y."/>
            <person name="Zhu J."/>
            <person name="Kan B."/>
            <person name="Ding K."/>
            <person name="Chen S."/>
            <person name="Cheng H."/>
            <person name="Yao Z."/>
            <person name="He B."/>
            <person name="Chen R."/>
            <person name="Ma D."/>
            <person name="Qiang B."/>
            <person name="Wen Y."/>
            <person name="Hou Y."/>
            <person name="Yu J."/>
        </authorList>
    </citation>
    <scope>NUCLEOTIDE SEQUENCE [LARGE SCALE GENOMIC DNA]</scope>
    <source>
        <strain>301 / Serotype 2a</strain>
    </source>
</reference>
<reference key="2">
    <citation type="journal article" date="2003" name="Infect. Immun.">
        <title>Complete genome sequence and comparative genomics of Shigella flexneri serotype 2a strain 2457T.</title>
        <authorList>
            <person name="Wei J."/>
            <person name="Goldberg M.B."/>
            <person name="Burland V."/>
            <person name="Venkatesan M.M."/>
            <person name="Deng W."/>
            <person name="Fournier G."/>
            <person name="Mayhew G.F."/>
            <person name="Plunkett G. III"/>
            <person name="Rose D.J."/>
            <person name="Darling A."/>
            <person name="Mau B."/>
            <person name="Perna N.T."/>
            <person name="Payne S.M."/>
            <person name="Runyen-Janecky L.J."/>
            <person name="Zhou S."/>
            <person name="Schwartz D.C."/>
            <person name="Blattner F.R."/>
        </authorList>
    </citation>
    <scope>NUCLEOTIDE SEQUENCE [LARGE SCALE GENOMIC DNA]</scope>
    <source>
        <strain>ATCC 700930 / 2457T / Serotype 2a</strain>
    </source>
</reference>